<keyword id="KW-0963">Cytoplasm</keyword>
<keyword id="KW-0269">Exonuclease</keyword>
<keyword id="KW-0378">Hydrolase</keyword>
<keyword id="KW-0540">Nuclease</keyword>
<keyword id="KW-1185">Reference proteome</keyword>
<gene>
    <name evidence="1" type="primary">xseA</name>
    <name type="ordered locus">NGR_c36360</name>
</gene>
<dbReference type="EC" id="3.1.11.6" evidence="1"/>
<dbReference type="EMBL" id="CP001389">
    <property type="protein sequence ID" value="ACP27357.1"/>
    <property type="molecule type" value="Genomic_DNA"/>
</dbReference>
<dbReference type="RefSeq" id="WP_012710101.1">
    <property type="nucleotide sequence ID" value="NC_012587.1"/>
</dbReference>
<dbReference type="RefSeq" id="YP_002828110.1">
    <property type="nucleotide sequence ID" value="NC_012587.1"/>
</dbReference>
<dbReference type="SMR" id="C3MCQ9"/>
<dbReference type="STRING" id="394.NGR_c36360"/>
<dbReference type="KEGG" id="rhi:NGR_c36360"/>
<dbReference type="PATRIC" id="fig|394.7.peg.6488"/>
<dbReference type="eggNOG" id="COG1570">
    <property type="taxonomic scope" value="Bacteria"/>
</dbReference>
<dbReference type="HOGENOM" id="CLU_023625_3_1_5"/>
<dbReference type="OrthoDB" id="9802795at2"/>
<dbReference type="Proteomes" id="UP000001054">
    <property type="component" value="Chromosome"/>
</dbReference>
<dbReference type="GO" id="GO:0005737">
    <property type="term" value="C:cytoplasm"/>
    <property type="evidence" value="ECO:0007669"/>
    <property type="project" value="UniProtKB-SubCell"/>
</dbReference>
<dbReference type="GO" id="GO:0009318">
    <property type="term" value="C:exodeoxyribonuclease VII complex"/>
    <property type="evidence" value="ECO:0007669"/>
    <property type="project" value="InterPro"/>
</dbReference>
<dbReference type="GO" id="GO:0008855">
    <property type="term" value="F:exodeoxyribonuclease VII activity"/>
    <property type="evidence" value="ECO:0007669"/>
    <property type="project" value="UniProtKB-UniRule"/>
</dbReference>
<dbReference type="GO" id="GO:0003676">
    <property type="term" value="F:nucleic acid binding"/>
    <property type="evidence" value="ECO:0007669"/>
    <property type="project" value="InterPro"/>
</dbReference>
<dbReference type="GO" id="GO:0006308">
    <property type="term" value="P:DNA catabolic process"/>
    <property type="evidence" value="ECO:0007669"/>
    <property type="project" value="UniProtKB-UniRule"/>
</dbReference>
<dbReference type="CDD" id="cd04489">
    <property type="entry name" value="ExoVII_LU_OBF"/>
    <property type="match status" value="1"/>
</dbReference>
<dbReference type="HAMAP" id="MF_00378">
    <property type="entry name" value="Exonuc_7_L"/>
    <property type="match status" value="1"/>
</dbReference>
<dbReference type="InterPro" id="IPR003753">
    <property type="entry name" value="Exonuc_VII_L"/>
</dbReference>
<dbReference type="InterPro" id="IPR020579">
    <property type="entry name" value="Exonuc_VII_lsu_C"/>
</dbReference>
<dbReference type="InterPro" id="IPR025824">
    <property type="entry name" value="OB-fold_nuc-bd_dom"/>
</dbReference>
<dbReference type="NCBIfam" id="TIGR00237">
    <property type="entry name" value="xseA"/>
    <property type="match status" value="1"/>
</dbReference>
<dbReference type="PANTHER" id="PTHR30008">
    <property type="entry name" value="EXODEOXYRIBONUCLEASE 7 LARGE SUBUNIT"/>
    <property type="match status" value="1"/>
</dbReference>
<dbReference type="PANTHER" id="PTHR30008:SF0">
    <property type="entry name" value="EXODEOXYRIBONUCLEASE 7 LARGE SUBUNIT"/>
    <property type="match status" value="1"/>
</dbReference>
<dbReference type="Pfam" id="PF02601">
    <property type="entry name" value="Exonuc_VII_L"/>
    <property type="match status" value="2"/>
</dbReference>
<dbReference type="Pfam" id="PF13742">
    <property type="entry name" value="tRNA_anti_2"/>
    <property type="match status" value="1"/>
</dbReference>
<protein>
    <recommendedName>
        <fullName evidence="1">Exodeoxyribonuclease 7 large subunit</fullName>
        <ecNumber evidence="1">3.1.11.6</ecNumber>
    </recommendedName>
    <alternativeName>
        <fullName evidence="1">Exodeoxyribonuclease VII large subunit</fullName>
        <shortName evidence="1">Exonuclease VII large subunit</shortName>
    </alternativeName>
</protein>
<organism>
    <name type="scientific">Sinorhizobium fredii (strain NBRC 101917 / NGR234)</name>
    <dbReference type="NCBI Taxonomy" id="394"/>
    <lineage>
        <taxon>Bacteria</taxon>
        <taxon>Pseudomonadati</taxon>
        <taxon>Pseudomonadota</taxon>
        <taxon>Alphaproteobacteria</taxon>
        <taxon>Hyphomicrobiales</taxon>
        <taxon>Rhizobiaceae</taxon>
        <taxon>Sinorhizobium/Ensifer group</taxon>
        <taxon>Sinorhizobium</taxon>
    </lineage>
</organism>
<accession>C3MCQ9</accession>
<comment type="function">
    <text evidence="1">Bidirectionally degrades single-stranded DNA into large acid-insoluble oligonucleotides, which are then degraded further into small acid-soluble oligonucleotides.</text>
</comment>
<comment type="catalytic activity">
    <reaction evidence="1">
        <text>Exonucleolytic cleavage in either 5'- to 3'- or 3'- to 5'-direction to yield nucleoside 5'-phosphates.</text>
        <dbReference type="EC" id="3.1.11.6"/>
    </reaction>
</comment>
<comment type="subunit">
    <text evidence="1">Heterooligomer composed of large and small subunits.</text>
</comment>
<comment type="subcellular location">
    <subcellularLocation>
        <location evidence="1">Cytoplasm</location>
    </subcellularLocation>
</comment>
<comment type="similarity">
    <text evidence="1">Belongs to the XseA family.</text>
</comment>
<proteinExistence type="inferred from homology"/>
<reference key="1">
    <citation type="journal article" date="2009" name="Appl. Environ. Microbiol.">
        <title>Rhizobium sp. strain NGR234 possesses a remarkable number of secretion systems.</title>
        <authorList>
            <person name="Schmeisser C."/>
            <person name="Liesegang H."/>
            <person name="Krysciak D."/>
            <person name="Bakkou N."/>
            <person name="Le Quere A."/>
            <person name="Wollherr A."/>
            <person name="Heinemeyer I."/>
            <person name="Morgenstern B."/>
            <person name="Pommerening-Roeser A."/>
            <person name="Flores M."/>
            <person name="Palacios R."/>
            <person name="Brenner S."/>
            <person name="Gottschalk G."/>
            <person name="Schmitz R.A."/>
            <person name="Broughton W.J."/>
            <person name="Perret X."/>
            <person name="Strittmatter A.W."/>
            <person name="Streit W.R."/>
        </authorList>
    </citation>
    <scope>NUCLEOTIDE SEQUENCE [LARGE SCALE GENOMIC DNA]</scope>
    <source>
        <strain>NBRC 101917 / NGR234</strain>
    </source>
</reference>
<evidence type="ECO:0000255" key="1">
    <source>
        <dbReference type="HAMAP-Rule" id="MF_00378"/>
    </source>
</evidence>
<evidence type="ECO:0000256" key="2">
    <source>
        <dbReference type="SAM" id="MobiDB-lite"/>
    </source>
</evidence>
<name>EX7L_SINFN</name>
<feature type="chain" id="PRO_1000200676" description="Exodeoxyribonuclease 7 large subunit">
    <location>
        <begin position="1"/>
        <end position="527"/>
    </location>
</feature>
<feature type="region of interest" description="Disordered" evidence="2">
    <location>
        <begin position="499"/>
        <end position="527"/>
    </location>
</feature>
<sequence length="527" mass="57061">MTSFFDSDSSSNVAEYSVSELSGSIKRTLEQAFEHVRVRGEISGYRGPHSSGHAYFALKDDRARMEAVIWKGTFARLKLRPEEGMEVIATGRVTTFPGSSKYQIVIDSLEPAGAGALMALLEERKRKLAAEGLFDAARKRPLPFMPKVIGVVTSPTGAVIRDILHRIADRFPVHVVVWPVRVQGDGASEEVAAAIRGFNALEEGGPIPRPDVLIVARGGGSLEDLWGFNDEAVVRAVAASGIPLISAVGHETDWTLIDYASDQRAPTPTGAAEMAVPVKADLEAQVANLSARLQAAATRQMDHRRHALRALARALPSLDQLLALPRRRFDEAAAGLGRGLQMNTANKRRSFERIAAHLRPELLTTRIREQRRHLLEAINKAERCVERQIDRRQARVSAADASLRTLPSRLAGQIHRSSDRVSGLGRRADAAMAAEMRRLKGALAAQDRVLQSLSYRNVLQRGFALVRDAAGDPVKQAAAVTAGMALSLEFADGRVSAVAGEEGAPPPAAPKKRASRPVVPTKQGSLF</sequence>